<comment type="function">
    <text evidence="9 10">Component of the chloroplast ribosome (chloro-ribosome), a dedicated translation machinery responsible for the synthesis of chloroplast genome-encoded proteins, including proteins of the transcription and translation machinery and components of the photosynthetic apparatus.</text>
</comment>
<comment type="subunit">
    <text evidence="2 3">Component of the chloroplast large ribosomal subunit (LSU). Mature 70S chloroplast ribosomes of higher plants consist of a small (30S) and a large (50S) subunit. The 30S small subunit contains 1 molecule of ribosomal RNA (16S rRNA) and 24 different proteins. The 50S large subunit contains 3 rRNA molecules (23S, 5S and 4.5S rRNA) and 33 different proteins.</text>
</comment>
<comment type="subcellular location">
    <subcellularLocation>
        <location evidence="2 3">Plastid</location>
        <location evidence="2 3">Chloroplast</location>
    </subcellularLocation>
</comment>
<comment type="similarity">
    <text evidence="8">Belongs to the universal ribosomal protein uL2 family.</text>
</comment>
<feature type="initiator methionine" description="Removed" evidence="2 4 5">
    <location>
        <position position="1"/>
    </location>
</feature>
<feature type="chain" id="PRO_0000129707" description="Large ribosomal subunit protein uL2cz/uL2cy">
    <location>
        <begin position="2"/>
        <end position="272"/>
    </location>
</feature>
<feature type="region of interest" description="Disordered" evidence="1">
    <location>
        <begin position="1"/>
        <end position="33"/>
    </location>
</feature>
<feature type="region of interest" description="Disordered" evidence="1">
    <location>
        <begin position="220"/>
        <end position="272"/>
    </location>
</feature>
<feature type="compositionally biased region" description="Polar residues" evidence="1">
    <location>
        <begin position="7"/>
        <end position="30"/>
    </location>
</feature>
<feature type="modified residue" description="N-methylalanine" evidence="5">
    <location>
        <position position="2"/>
    </location>
</feature>
<feature type="strand" evidence="12">
    <location>
        <begin position="36"/>
        <end position="39"/>
    </location>
</feature>
<feature type="strand" evidence="13">
    <location>
        <begin position="40"/>
        <end position="45"/>
    </location>
</feature>
<feature type="strand" evidence="11">
    <location>
        <begin position="47"/>
        <end position="49"/>
    </location>
</feature>
<feature type="strand" evidence="12">
    <location>
        <begin position="71"/>
        <end position="78"/>
    </location>
</feature>
<feature type="strand" evidence="12">
    <location>
        <begin position="83"/>
        <end position="85"/>
    </location>
</feature>
<feature type="strand" evidence="12">
    <location>
        <begin position="87"/>
        <end position="91"/>
    </location>
</feature>
<feature type="strand" evidence="13">
    <location>
        <begin position="93"/>
        <end position="95"/>
    </location>
</feature>
<feature type="strand" evidence="12">
    <location>
        <begin position="98"/>
        <end position="101"/>
    </location>
</feature>
<feature type="strand" evidence="12">
    <location>
        <begin position="111"/>
        <end position="117"/>
    </location>
</feature>
<feature type="strand" evidence="12">
    <location>
        <begin position="125"/>
        <end position="127"/>
    </location>
</feature>
<feature type="strand" evidence="12">
    <location>
        <begin position="136"/>
        <end position="140"/>
    </location>
</feature>
<feature type="turn" evidence="12">
    <location>
        <begin position="144"/>
        <end position="146"/>
    </location>
</feature>
<feature type="strand" evidence="13">
    <location>
        <begin position="153"/>
        <end position="155"/>
    </location>
</feature>
<feature type="strand" evidence="12">
    <location>
        <begin position="158"/>
        <end position="164"/>
    </location>
</feature>
<feature type="strand" evidence="12">
    <location>
        <begin position="167"/>
        <end position="171"/>
    </location>
</feature>
<feature type="turn" evidence="13">
    <location>
        <begin position="173"/>
        <end position="175"/>
    </location>
</feature>
<feature type="strand" evidence="12">
    <location>
        <begin position="177"/>
        <end position="181"/>
    </location>
</feature>
<feature type="strand" evidence="11">
    <location>
        <begin position="182"/>
        <end position="184"/>
    </location>
</feature>
<feature type="strand" evidence="12">
    <location>
        <begin position="185"/>
        <end position="189"/>
    </location>
</feature>
<feature type="helix" evidence="12">
    <location>
        <begin position="194"/>
        <end position="198"/>
    </location>
</feature>
<feature type="helix" evidence="12">
    <location>
        <begin position="204"/>
        <end position="208"/>
    </location>
</feature>
<feature type="turn" evidence="12">
    <location>
        <begin position="209"/>
        <end position="211"/>
    </location>
</feature>
<feature type="helix" evidence="12">
    <location>
        <begin position="218"/>
        <end position="220"/>
    </location>
</feature>
<feature type="turn" evidence="12">
    <location>
        <begin position="223"/>
        <end position="225"/>
    </location>
</feature>
<feature type="strand" evidence="11">
    <location>
        <begin position="226"/>
        <end position="228"/>
    </location>
</feature>
<feature type="strand" evidence="12">
    <location>
        <begin position="232"/>
        <end position="234"/>
    </location>
</feature>
<feature type="strand" evidence="13">
    <location>
        <begin position="239"/>
        <end position="241"/>
    </location>
</feature>
<feature type="strand" evidence="12">
    <location>
        <begin position="247"/>
        <end position="249"/>
    </location>
</feature>
<feature type="strand" evidence="13">
    <location>
        <begin position="258"/>
        <end position="260"/>
    </location>
</feature>
<feature type="helix" evidence="12">
    <location>
        <begin position="261"/>
        <end position="264"/>
    </location>
</feature>
<feature type="strand" evidence="12">
    <location>
        <begin position="266"/>
        <end position="268"/>
    </location>
</feature>
<name>RK2_SPIOL</name>
<protein>
    <recommendedName>
        <fullName evidence="7">Large ribosomal subunit protein uL2cz/uL2cy</fullName>
    </recommendedName>
    <alternativeName>
        <fullName evidence="6">50S ribosomal protein L2, chloroplastic</fullName>
    </alternativeName>
    <alternativeName>
        <fullName>Ribosomal protein CS-L4</fullName>
    </alternativeName>
</protein>
<geneLocation type="chloroplast"/>
<evidence type="ECO:0000256" key="1">
    <source>
        <dbReference type="SAM" id="MobiDB-lite"/>
    </source>
</evidence>
<evidence type="ECO:0000269" key="2">
    <source>
    </source>
</evidence>
<evidence type="ECO:0000269" key="3">
    <source>
    </source>
</evidence>
<evidence type="ECO:0000269" key="4">
    <source>
    </source>
</evidence>
<evidence type="ECO:0000269" key="5">
    <source ref="5"/>
</evidence>
<evidence type="ECO:0000303" key="6">
    <source>
    </source>
</evidence>
<evidence type="ECO:0000303" key="7">
    <source>
    </source>
</evidence>
<evidence type="ECO:0000305" key="8"/>
<evidence type="ECO:0000305" key="9">
    <source>
    </source>
</evidence>
<evidence type="ECO:0000305" key="10">
    <source>
    </source>
</evidence>
<evidence type="ECO:0007829" key="11">
    <source>
        <dbReference type="PDB" id="5H1S"/>
    </source>
</evidence>
<evidence type="ECO:0007829" key="12">
    <source>
        <dbReference type="PDB" id="5MMI"/>
    </source>
</evidence>
<evidence type="ECO:0007829" key="13">
    <source>
        <dbReference type="PDB" id="5X8T"/>
    </source>
</evidence>
<accession>P06509</accession>
<accession>Q9M3I1</accession>
<accession>Q9THV0</accession>
<gene>
    <name type="primary">rpl2-A</name>
</gene>
<gene>
    <name type="primary">rpl2-B</name>
</gene>
<sequence>MAIHLYKTSTSSTRNGAVQVKSNPRNNLISGQRRCGKGRNARGIITARHRGGGHKRLYRKIDFRRNEKDIYGKIVTIEYDPNRNAYICLIHYGDGEKRYILHPRGAIIGDTIVSGTEVPIKMGNALPLTDMPLGTAIHNIEITLGRGGQLARAAGAVAKLIAKEGKSATLKLPSGEVRLISKNCSATVGQVGNVGVNQKRLGRAGSKRWLGKRPVVRGVVMNPVDHPHGGGEGRAPIGRKSPTTPWGYPALGRRSRKRNKYSDNFIIRRRSK</sequence>
<proteinExistence type="evidence at protein level"/>
<keyword id="KW-0002">3D-structure</keyword>
<keyword id="KW-0150">Chloroplast</keyword>
<keyword id="KW-0903">Direct protein sequencing</keyword>
<keyword id="KW-0488">Methylation</keyword>
<keyword id="KW-0934">Plastid</keyword>
<keyword id="KW-1185">Reference proteome</keyword>
<keyword id="KW-0687">Ribonucleoprotein</keyword>
<keyword id="KW-0689">Ribosomal protein</keyword>
<organism>
    <name type="scientific">Spinacia oleracea</name>
    <name type="common">Spinach</name>
    <dbReference type="NCBI Taxonomy" id="3562"/>
    <lineage>
        <taxon>Eukaryota</taxon>
        <taxon>Viridiplantae</taxon>
        <taxon>Streptophyta</taxon>
        <taxon>Embryophyta</taxon>
        <taxon>Tracheophyta</taxon>
        <taxon>Spermatophyta</taxon>
        <taxon>Magnoliopsida</taxon>
        <taxon>eudicotyledons</taxon>
        <taxon>Gunneridae</taxon>
        <taxon>Pentapetalae</taxon>
        <taxon>Caryophyllales</taxon>
        <taxon>Chenopodiaceae</taxon>
        <taxon>Chenopodioideae</taxon>
        <taxon>Anserineae</taxon>
        <taxon>Spinacia</taxon>
    </lineage>
</organism>
<reference key="1">
    <citation type="journal article" date="1984" name="Nucleic Acids Res.">
        <title>Junctions of the large single copy region and the inverted repeats in Spinacia oleracea and Nicotiana debneyi chloroplast DNA: sequence of the genes for tRNAHis and the ribosomal proteins S19 and L2.</title>
        <authorList>
            <person name="Zurawski G."/>
            <person name="Bottomley W."/>
            <person name="Whitfeld P.R."/>
        </authorList>
    </citation>
    <scope>NUCLEOTIDE SEQUENCE [GENOMIC DNA]</scope>
    <scope>PROTEIN SEQUENCE OF 2-11</scope>
</reference>
<reference key="2">
    <citation type="journal article" date="2000" name="J. Biol. Chem.">
        <title>The plastid ribosomal proteins. Identification of all the proteins in the 50S subunit of an organelle ribosome (chloroplast).</title>
        <authorList>
            <person name="Yamaguchi K."/>
            <person name="Subramanian A.R."/>
        </authorList>
    </citation>
    <scope>NUCLEOTIDE SEQUENCE [GENOMIC DNA]</scope>
    <scope>PROTEIN SEQUENCE OF 2-7</scope>
    <scope>SUBUNIT</scope>
    <scope>SUBCELLULAR LOCATION</scope>
    <source>
        <strain>cv. Alwaro</strain>
        <tissue>Leaf</tissue>
    </source>
</reference>
<reference key="3">
    <citation type="journal article" date="2001" name="Plant Mol. Biol.">
        <title>The plastid chromosome of spinach (Spinacia oleracea): complete nucleotide sequence and gene organization.</title>
        <authorList>
            <person name="Schmitz-Linneweber C."/>
            <person name="Maier R.M."/>
            <person name="Alcaraz J.-P."/>
            <person name="Cottet A."/>
            <person name="Herrmann R.G."/>
            <person name="Mache R."/>
        </authorList>
    </citation>
    <scope>NUCLEOTIDE SEQUENCE [LARGE SCALE GENOMIC DNA]</scope>
    <source>
        <strain>cv. Geant d'hiver</strain>
        <strain>cv. Monatol</strain>
    </source>
</reference>
<reference key="4">
    <citation type="journal article" date="1988" name="Nucleic Acids Res.">
        <title>Expression of the rpl23, rpl2 and rps19 genes in spinach chloroplasts.</title>
        <authorList>
            <person name="Thomas F."/>
            <person name="Massenet O."/>
            <person name="Dorne A.-M."/>
            <person name="Briat J.-F."/>
            <person name="Mache R."/>
        </authorList>
    </citation>
    <scope>NUCLEOTIDE SEQUENCE [GENOMIC DNA] OF 1-20</scope>
</reference>
<reference key="5">
    <citation type="journal article" date="1987" name="Biochemistry">
        <title>Occurrence of a methylated protein in chloroplast ribosomes.</title>
        <authorList>
            <person name="Kamp R.M."/>
            <person name="Srinivasa B.R."/>
            <person name="von Knoblauch K."/>
            <person name="Subramanian A.R."/>
        </authorList>
    </citation>
    <scope>METHYLATION AT ALA-2</scope>
    <scope>PROTEIN SEQUENCE OF 2-14; 123-128; 132-136 AND 222-229</scope>
    <source>
        <strain>cv. Alwaro</strain>
    </source>
</reference>
<reference key="6">
    <citation type="journal article" date="2007" name="Proc. Natl. Acad. Sci. U.S.A.">
        <title>Cryo-EM study of the spinach chloroplast ribosome reveals the structural and functional roles of plastid-specific ribosomal proteins.</title>
        <authorList>
            <person name="Sharma M.R."/>
            <person name="Wilson D.N."/>
            <person name="Datta P.P."/>
            <person name="Barat C."/>
            <person name="Schluenzen F."/>
            <person name="Fucini P."/>
            <person name="Agrawal R.K."/>
        </authorList>
    </citation>
    <scope>STRUCTURE BY ELECTRON MICROSCOPY (9.4 ANGSTROMS)</scope>
</reference>
<reference key="7">
    <citation type="journal article" date="2016" name="Sci. Rep.">
        <title>Cryo-EM structure of the large subunit of the spinach chloroplast ribosome.</title>
        <authorList>
            <person name="Ahmed T."/>
            <person name="Yin Z."/>
            <person name="Bhushan S."/>
        </authorList>
    </citation>
    <scope>STRUCTURE BY ELECTRON MICROSCOPY (3.50 ANGSTROMS)</scope>
</reference>
<reference key="8">
    <citation type="journal article" date="2017" name="EMBO J.">
        <title>The complete structure of the chloroplast 70S ribosome in complex with translation factor pY.</title>
        <authorList>
            <person name="Bieri P."/>
            <person name="Leibundgut M."/>
            <person name="Saurer M."/>
            <person name="Boehringer D."/>
            <person name="Ban N."/>
        </authorList>
    </citation>
    <scope>STRUCTURE BY ELECTRON MICROSCOPY (3.25 ANGSTROMS)</scope>
    <scope>SUBUNIT</scope>
    <scope>SUBCELLULAR LOCATION</scope>
</reference>
<dbReference type="EMBL" id="AJ244023">
    <property type="protein sequence ID" value="CAB56543.3"/>
    <property type="molecule type" value="Genomic_DNA"/>
</dbReference>
<dbReference type="EMBL" id="AJ400848">
    <property type="protein sequence ID" value="CAB88803.1"/>
    <property type="molecule type" value="Genomic_DNA"/>
</dbReference>
<dbReference type="EMBL" id="AJ400848">
    <property type="protein sequence ID" value="CAB88768.1"/>
    <property type="molecule type" value="Genomic_DNA"/>
</dbReference>
<dbReference type="EMBL" id="X07462">
    <property type="protein sequence ID" value="CAA30345.1"/>
    <property type="molecule type" value="Genomic_DNA"/>
</dbReference>
<dbReference type="PIR" id="S07918">
    <property type="entry name" value="R5SP2"/>
</dbReference>
<dbReference type="PDB" id="4V61">
    <property type="method" value="EM"/>
    <property type="resolution" value="9.40 A"/>
    <property type="chains" value="BE=1-269"/>
</dbReference>
<dbReference type="PDB" id="5H1S">
    <property type="method" value="EM"/>
    <property type="resolution" value="3.50 A"/>
    <property type="chains" value="E=2-272"/>
</dbReference>
<dbReference type="PDB" id="5MLC">
    <property type="method" value="EM"/>
    <property type="resolution" value="3.90 A"/>
    <property type="chains" value="D=1-272"/>
</dbReference>
<dbReference type="PDB" id="5MMI">
    <property type="method" value="EM"/>
    <property type="resolution" value="3.25 A"/>
    <property type="chains" value="C=1-272"/>
</dbReference>
<dbReference type="PDB" id="5MMM">
    <property type="method" value="EM"/>
    <property type="resolution" value="3.40 A"/>
    <property type="chains" value="C=1-272"/>
</dbReference>
<dbReference type="PDB" id="5X8P">
    <property type="method" value="EM"/>
    <property type="resolution" value="3.40 A"/>
    <property type="chains" value="C=2-272"/>
</dbReference>
<dbReference type="PDB" id="5X8T">
    <property type="method" value="EM"/>
    <property type="resolution" value="3.30 A"/>
    <property type="chains" value="C=2-272"/>
</dbReference>
<dbReference type="PDB" id="6ERI">
    <property type="method" value="EM"/>
    <property type="resolution" value="3.00 A"/>
    <property type="chains" value="AC=26-271"/>
</dbReference>
<dbReference type="PDBsum" id="4V61"/>
<dbReference type="PDBsum" id="5H1S"/>
<dbReference type="PDBsum" id="5MLC"/>
<dbReference type="PDBsum" id="5MMI"/>
<dbReference type="PDBsum" id="5MMM"/>
<dbReference type="PDBsum" id="5X8P"/>
<dbReference type="PDBsum" id="5X8T"/>
<dbReference type="PDBsum" id="6ERI"/>
<dbReference type="EMDB" id="EMD-3525"/>
<dbReference type="EMDB" id="EMD-3531"/>
<dbReference type="EMDB" id="EMD-3533"/>
<dbReference type="EMDB" id="EMD-3941"/>
<dbReference type="EMDB" id="EMD-6709"/>
<dbReference type="EMDB" id="EMD-6711"/>
<dbReference type="EMDB" id="EMD-9572"/>
<dbReference type="SMR" id="P06509"/>
<dbReference type="FunCoup" id="P06509">
    <property type="interactions" value="695"/>
</dbReference>
<dbReference type="IntAct" id="P06509">
    <property type="interactions" value="1"/>
</dbReference>
<dbReference type="STRING" id="3562.P06509"/>
<dbReference type="KEGG" id="soe:2715624"/>
<dbReference type="InParanoid" id="P06509"/>
<dbReference type="OrthoDB" id="563959at2759"/>
<dbReference type="Proteomes" id="UP001155700">
    <property type="component" value="Unplaced"/>
</dbReference>
<dbReference type="GO" id="GO:0009507">
    <property type="term" value="C:chloroplast"/>
    <property type="evidence" value="ECO:0007669"/>
    <property type="project" value="UniProtKB-SubCell"/>
</dbReference>
<dbReference type="GO" id="GO:0005762">
    <property type="term" value="C:mitochondrial large ribosomal subunit"/>
    <property type="evidence" value="ECO:0000318"/>
    <property type="project" value="GO_Central"/>
</dbReference>
<dbReference type="GO" id="GO:0003723">
    <property type="term" value="F:RNA binding"/>
    <property type="evidence" value="ECO:0000318"/>
    <property type="project" value="GO_Central"/>
</dbReference>
<dbReference type="GO" id="GO:0019843">
    <property type="term" value="F:rRNA binding"/>
    <property type="evidence" value="ECO:0007669"/>
    <property type="project" value="UniProtKB-UniRule"/>
</dbReference>
<dbReference type="GO" id="GO:0003735">
    <property type="term" value="F:structural constituent of ribosome"/>
    <property type="evidence" value="ECO:0000318"/>
    <property type="project" value="GO_Central"/>
</dbReference>
<dbReference type="GO" id="GO:0016740">
    <property type="term" value="F:transferase activity"/>
    <property type="evidence" value="ECO:0007669"/>
    <property type="project" value="InterPro"/>
</dbReference>
<dbReference type="GO" id="GO:0032543">
    <property type="term" value="P:mitochondrial translation"/>
    <property type="evidence" value="ECO:0000318"/>
    <property type="project" value="GO_Central"/>
</dbReference>
<dbReference type="FunFam" id="4.10.950.10:FF:000001">
    <property type="entry name" value="50S ribosomal protein L2"/>
    <property type="match status" value="1"/>
</dbReference>
<dbReference type="FunFam" id="2.30.30.30:FF:000008">
    <property type="entry name" value="50S ribosomal protein L2, chloroplastic"/>
    <property type="match status" value="1"/>
</dbReference>
<dbReference type="FunFam" id="2.40.50.140:FF:000029">
    <property type="entry name" value="50S ribosomal protein L2, chloroplastic"/>
    <property type="match status" value="1"/>
</dbReference>
<dbReference type="Gene3D" id="2.30.30.30">
    <property type="match status" value="1"/>
</dbReference>
<dbReference type="Gene3D" id="2.40.50.140">
    <property type="entry name" value="Nucleic acid-binding proteins"/>
    <property type="match status" value="1"/>
</dbReference>
<dbReference type="Gene3D" id="4.10.950.10">
    <property type="entry name" value="Ribosomal protein L2, domain 3"/>
    <property type="match status" value="1"/>
</dbReference>
<dbReference type="HAMAP" id="MF_01320_B">
    <property type="entry name" value="Ribosomal_uL2_B"/>
    <property type="match status" value="1"/>
</dbReference>
<dbReference type="InterPro" id="IPR012340">
    <property type="entry name" value="NA-bd_OB-fold"/>
</dbReference>
<dbReference type="InterPro" id="IPR014722">
    <property type="entry name" value="Rib_uL2_dom2"/>
</dbReference>
<dbReference type="InterPro" id="IPR002171">
    <property type="entry name" value="Ribosomal_uL2"/>
</dbReference>
<dbReference type="InterPro" id="IPR005880">
    <property type="entry name" value="Ribosomal_uL2_bac/org-type"/>
</dbReference>
<dbReference type="InterPro" id="IPR022669">
    <property type="entry name" value="Ribosomal_uL2_C"/>
</dbReference>
<dbReference type="InterPro" id="IPR022671">
    <property type="entry name" value="Ribosomal_uL2_CS"/>
</dbReference>
<dbReference type="InterPro" id="IPR014726">
    <property type="entry name" value="Ribosomal_uL2_dom3"/>
</dbReference>
<dbReference type="InterPro" id="IPR022666">
    <property type="entry name" value="Ribosomal_uL2_RNA-bd_dom"/>
</dbReference>
<dbReference type="InterPro" id="IPR008991">
    <property type="entry name" value="Translation_prot_SH3-like_sf"/>
</dbReference>
<dbReference type="NCBIfam" id="TIGR01171">
    <property type="entry name" value="rplB_bact"/>
    <property type="match status" value="1"/>
</dbReference>
<dbReference type="PANTHER" id="PTHR13691:SF5">
    <property type="entry name" value="LARGE RIBOSOMAL SUBUNIT PROTEIN UL2M"/>
    <property type="match status" value="1"/>
</dbReference>
<dbReference type="PANTHER" id="PTHR13691">
    <property type="entry name" value="RIBOSOMAL PROTEIN L2"/>
    <property type="match status" value="1"/>
</dbReference>
<dbReference type="Pfam" id="PF00181">
    <property type="entry name" value="Ribosomal_L2"/>
    <property type="match status" value="1"/>
</dbReference>
<dbReference type="Pfam" id="PF03947">
    <property type="entry name" value="Ribosomal_L2_C"/>
    <property type="match status" value="1"/>
</dbReference>
<dbReference type="PIRSF" id="PIRSF002158">
    <property type="entry name" value="Ribosomal_L2"/>
    <property type="match status" value="1"/>
</dbReference>
<dbReference type="SMART" id="SM01383">
    <property type="entry name" value="Ribosomal_L2"/>
    <property type="match status" value="1"/>
</dbReference>
<dbReference type="SMART" id="SM01382">
    <property type="entry name" value="Ribosomal_L2_C"/>
    <property type="match status" value="1"/>
</dbReference>
<dbReference type="SUPFAM" id="SSF50249">
    <property type="entry name" value="Nucleic acid-binding proteins"/>
    <property type="match status" value="1"/>
</dbReference>
<dbReference type="SUPFAM" id="SSF50104">
    <property type="entry name" value="Translation proteins SH3-like domain"/>
    <property type="match status" value="1"/>
</dbReference>
<dbReference type="PROSITE" id="PS00467">
    <property type="entry name" value="RIBOSOMAL_L2"/>
    <property type="match status" value="1"/>
</dbReference>